<organism>
    <name type="scientific">Candida glabrata (strain ATCC 2001 / BCRC 20586 / JCM 3761 / NBRC 0622 / NRRL Y-65 / CBS 138)</name>
    <name type="common">Yeast</name>
    <name type="synonym">Nakaseomyces glabratus</name>
    <dbReference type="NCBI Taxonomy" id="284593"/>
    <lineage>
        <taxon>Eukaryota</taxon>
        <taxon>Fungi</taxon>
        <taxon>Dikarya</taxon>
        <taxon>Ascomycota</taxon>
        <taxon>Saccharomycotina</taxon>
        <taxon>Saccharomycetes</taxon>
        <taxon>Saccharomycetales</taxon>
        <taxon>Saccharomycetaceae</taxon>
        <taxon>Nakaseomyces</taxon>
    </lineage>
</organism>
<dbReference type="EMBL" id="CR380959">
    <property type="protein sequence ID" value="CAG62868.1"/>
    <property type="molecule type" value="Genomic_DNA"/>
</dbReference>
<dbReference type="RefSeq" id="XP_449888.1">
    <property type="nucleotide sequence ID" value="XM_449888.1"/>
</dbReference>
<dbReference type="SMR" id="Q6FIQ6"/>
<dbReference type="STRING" id="284593.Q6FIQ6"/>
<dbReference type="EnsemblFungi" id="CAGL0M12551g-T">
    <property type="protein sequence ID" value="CAGL0M12551g-T-p1"/>
    <property type="gene ID" value="CAGL0M12551g"/>
</dbReference>
<dbReference type="KEGG" id="cgr:2891439"/>
<dbReference type="CGD" id="CAL0136579">
    <property type="gene designation" value="CAGL0M12551g"/>
</dbReference>
<dbReference type="VEuPathDB" id="FungiDB:B1J91_M12551g"/>
<dbReference type="VEuPathDB" id="FungiDB:CAGL0M12551g"/>
<dbReference type="eggNOG" id="ENOG502RZ9F">
    <property type="taxonomic scope" value="Eukaryota"/>
</dbReference>
<dbReference type="HOGENOM" id="CLU_118207_0_0_1"/>
<dbReference type="InParanoid" id="Q6FIQ6"/>
<dbReference type="OMA" id="WHYADES"/>
<dbReference type="Proteomes" id="UP000002428">
    <property type="component" value="Chromosome M"/>
</dbReference>
<dbReference type="GO" id="GO:0005737">
    <property type="term" value="C:cytoplasm"/>
    <property type="evidence" value="ECO:0007669"/>
    <property type="project" value="UniProtKB-SubCell"/>
</dbReference>
<dbReference type="GO" id="GO:0006112">
    <property type="term" value="P:energy reserve metabolic process"/>
    <property type="evidence" value="ECO:0007669"/>
    <property type="project" value="EnsemblFungi"/>
</dbReference>
<dbReference type="Gene3D" id="3.40.1000.40">
    <property type="entry name" value="Respiratory growth induced protein 1"/>
    <property type="match status" value="1"/>
</dbReference>
<dbReference type="InterPro" id="IPR022554">
    <property type="entry name" value="RGI1"/>
</dbReference>
<dbReference type="InterPro" id="IPR038235">
    <property type="entry name" value="RGI1_sf"/>
</dbReference>
<dbReference type="Pfam" id="PF10843">
    <property type="entry name" value="RGI1"/>
    <property type="match status" value="1"/>
</dbReference>
<accession>Q6FIQ6</accession>
<sequence length="164" mass="19354">MAKKEKKAKVATITTKSGESLKVFEELNDFETFLRGEVEDNEFDHVHCKAKYYPPFVLHESHDDPEKIKDTNNSHNKKFVRHLHQHVEKHLLKDIREMFQNPDLKFKNKSKEETFEKITWHYADESELNAKKFRIQLDVTCTHDGAMVDVDYRTEPIAAQEPVI</sequence>
<evidence type="ECO:0000250" key="1"/>
<evidence type="ECO:0000305" key="2"/>
<proteinExistence type="inferred from homology"/>
<comment type="function">
    <text evidence="1">Involved in the control of energetic metabolism and significantly contribute to cell fitness, especially under respiratory growth conditions.</text>
</comment>
<comment type="subcellular location">
    <subcellularLocation>
        <location evidence="1">Cytoplasm</location>
    </subcellularLocation>
</comment>
<comment type="similarity">
    <text evidence="2">Belongs to the RGI1 family.</text>
</comment>
<keyword id="KW-0963">Cytoplasm</keyword>
<keyword id="KW-1185">Reference proteome</keyword>
<name>RGI2_CANGA</name>
<feature type="chain" id="PRO_0000402298" description="Respiratory growth induced protein 2">
    <location>
        <begin position="1"/>
        <end position="164"/>
    </location>
</feature>
<protein>
    <recommendedName>
        <fullName>Respiratory growth induced protein 2</fullName>
    </recommendedName>
</protein>
<gene>
    <name type="primary">RGI2</name>
    <name type="ordered locus">CAGL0M12551g</name>
</gene>
<reference key="1">
    <citation type="journal article" date="2004" name="Nature">
        <title>Genome evolution in yeasts.</title>
        <authorList>
            <person name="Dujon B."/>
            <person name="Sherman D."/>
            <person name="Fischer G."/>
            <person name="Durrens P."/>
            <person name="Casaregola S."/>
            <person name="Lafontaine I."/>
            <person name="de Montigny J."/>
            <person name="Marck C."/>
            <person name="Neuveglise C."/>
            <person name="Talla E."/>
            <person name="Goffard N."/>
            <person name="Frangeul L."/>
            <person name="Aigle M."/>
            <person name="Anthouard V."/>
            <person name="Babour A."/>
            <person name="Barbe V."/>
            <person name="Barnay S."/>
            <person name="Blanchin S."/>
            <person name="Beckerich J.-M."/>
            <person name="Beyne E."/>
            <person name="Bleykasten C."/>
            <person name="Boisrame A."/>
            <person name="Boyer J."/>
            <person name="Cattolico L."/>
            <person name="Confanioleri F."/>
            <person name="de Daruvar A."/>
            <person name="Despons L."/>
            <person name="Fabre E."/>
            <person name="Fairhead C."/>
            <person name="Ferry-Dumazet H."/>
            <person name="Groppi A."/>
            <person name="Hantraye F."/>
            <person name="Hennequin C."/>
            <person name="Jauniaux N."/>
            <person name="Joyet P."/>
            <person name="Kachouri R."/>
            <person name="Kerrest A."/>
            <person name="Koszul R."/>
            <person name="Lemaire M."/>
            <person name="Lesur I."/>
            <person name="Ma L."/>
            <person name="Muller H."/>
            <person name="Nicaud J.-M."/>
            <person name="Nikolski M."/>
            <person name="Oztas S."/>
            <person name="Ozier-Kalogeropoulos O."/>
            <person name="Pellenz S."/>
            <person name="Potier S."/>
            <person name="Richard G.-F."/>
            <person name="Straub M.-L."/>
            <person name="Suleau A."/>
            <person name="Swennen D."/>
            <person name="Tekaia F."/>
            <person name="Wesolowski-Louvel M."/>
            <person name="Westhof E."/>
            <person name="Wirth B."/>
            <person name="Zeniou-Meyer M."/>
            <person name="Zivanovic Y."/>
            <person name="Bolotin-Fukuhara M."/>
            <person name="Thierry A."/>
            <person name="Bouchier C."/>
            <person name="Caudron B."/>
            <person name="Scarpelli C."/>
            <person name="Gaillardin C."/>
            <person name="Weissenbach J."/>
            <person name="Wincker P."/>
            <person name="Souciet J.-L."/>
        </authorList>
    </citation>
    <scope>NUCLEOTIDE SEQUENCE [LARGE SCALE GENOMIC DNA]</scope>
    <source>
        <strain>ATCC 2001 / BCRC 20586 / JCM 3761 / NBRC 0622 / NRRL Y-65 / CBS 138</strain>
    </source>
</reference>